<proteinExistence type="inferred from homology"/>
<accession>Q8EHS7</accession>
<comment type="function">
    <text evidence="1">Catalyzes the conversion of 4-hydroxy-tetrahydrodipicolinate (HTPA) to tetrahydrodipicolinate.</text>
</comment>
<comment type="catalytic activity">
    <reaction evidence="1">
        <text>(S)-2,3,4,5-tetrahydrodipicolinate + NAD(+) + H2O = (2S,4S)-4-hydroxy-2,3,4,5-tetrahydrodipicolinate + NADH + H(+)</text>
        <dbReference type="Rhea" id="RHEA:35323"/>
        <dbReference type="ChEBI" id="CHEBI:15377"/>
        <dbReference type="ChEBI" id="CHEBI:15378"/>
        <dbReference type="ChEBI" id="CHEBI:16845"/>
        <dbReference type="ChEBI" id="CHEBI:57540"/>
        <dbReference type="ChEBI" id="CHEBI:57945"/>
        <dbReference type="ChEBI" id="CHEBI:67139"/>
        <dbReference type="EC" id="1.17.1.8"/>
    </reaction>
</comment>
<comment type="catalytic activity">
    <reaction evidence="1">
        <text>(S)-2,3,4,5-tetrahydrodipicolinate + NADP(+) + H2O = (2S,4S)-4-hydroxy-2,3,4,5-tetrahydrodipicolinate + NADPH + H(+)</text>
        <dbReference type="Rhea" id="RHEA:35331"/>
        <dbReference type="ChEBI" id="CHEBI:15377"/>
        <dbReference type="ChEBI" id="CHEBI:15378"/>
        <dbReference type="ChEBI" id="CHEBI:16845"/>
        <dbReference type="ChEBI" id="CHEBI:57783"/>
        <dbReference type="ChEBI" id="CHEBI:58349"/>
        <dbReference type="ChEBI" id="CHEBI:67139"/>
        <dbReference type="EC" id="1.17.1.8"/>
    </reaction>
</comment>
<comment type="pathway">
    <text evidence="1">Amino-acid biosynthesis; L-lysine biosynthesis via DAP pathway; (S)-tetrahydrodipicolinate from L-aspartate: step 4/4.</text>
</comment>
<comment type="subcellular location">
    <subcellularLocation>
        <location evidence="1">Cytoplasm</location>
    </subcellularLocation>
</comment>
<comment type="similarity">
    <text evidence="1">Belongs to the DapB family.</text>
</comment>
<comment type="caution">
    <text evidence="2">Was originally thought to be a dihydrodipicolinate reductase (DHDPR), catalyzing the conversion of dihydrodipicolinate to tetrahydrodipicolinate. However, it was shown in E.coli that the substrate of the enzymatic reaction is not dihydrodipicolinate (DHDP) but in fact (2S,4S)-4-hydroxy-2,3,4,5-tetrahydrodipicolinic acid (HTPA), the product released by the DapA-catalyzed reaction.</text>
</comment>
<feature type="chain" id="PRO_0000141483" description="4-hydroxy-tetrahydrodipicolinate reductase">
    <location>
        <begin position="1"/>
        <end position="270"/>
    </location>
</feature>
<feature type="active site" description="Proton donor/acceptor" evidence="1">
    <location>
        <position position="158"/>
    </location>
</feature>
<feature type="active site" description="Proton donor" evidence="1">
    <location>
        <position position="162"/>
    </location>
</feature>
<feature type="binding site" evidence="1">
    <location>
        <begin position="11"/>
        <end position="16"/>
    </location>
    <ligand>
        <name>NAD(+)</name>
        <dbReference type="ChEBI" id="CHEBI:57540"/>
    </ligand>
</feature>
<feature type="binding site" evidence="1">
    <location>
        <position position="37"/>
    </location>
    <ligand>
        <name>NAD(+)</name>
        <dbReference type="ChEBI" id="CHEBI:57540"/>
    </ligand>
</feature>
<feature type="binding site" evidence="1">
    <location>
        <position position="38"/>
    </location>
    <ligand>
        <name>NADP(+)</name>
        <dbReference type="ChEBI" id="CHEBI:58349"/>
    </ligand>
</feature>
<feature type="binding site" evidence="1">
    <location>
        <begin position="101"/>
        <end position="103"/>
    </location>
    <ligand>
        <name>NAD(+)</name>
        <dbReference type="ChEBI" id="CHEBI:57540"/>
    </ligand>
</feature>
<feature type="binding site" evidence="1">
    <location>
        <begin position="125"/>
        <end position="128"/>
    </location>
    <ligand>
        <name>NAD(+)</name>
        <dbReference type="ChEBI" id="CHEBI:57540"/>
    </ligand>
</feature>
<feature type="binding site" evidence="1">
    <location>
        <position position="159"/>
    </location>
    <ligand>
        <name>(S)-2,3,4,5-tetrahydrodipicolinate</name>
        <dbReference type="ChEBI" id="CHEBI:16845"/>
    </ligand>
</feature>
<feature type="binding site" evidence="1">
    <location>
        <begin position="168"/>
        <end position="169"/>
    </location>
    <ligand>
        <name>(S)-2,3,4,5-tetrahydrodipicolinate</name>
        <dbReference type="ChEBI" id="CHEBI:16845"/>
    </ligand>
</feature>
<name>DAPB_SHEON</name>
<protein>
    <recommendedName>
        <fullName evidence="1">4-hydroxy-tetrahydrodipicolinate reductase</fullName>
        <shortName evidence="1">HTPA reductase</shortName>
        <ecNumber evidence="1">1.17.1.8</ecNumber>
    </recommendedName>
</protein>
<gene>
    <name evidence="1" type="primary">dapB</name>
    <name type="ordered locus">SO_1140</name>
</gene>
<organism>
    <name type="scientific">Shewanella oneidensis (strain ATCC 700550 / JCM 31522 / CIP 106686 / LMG 19005 / NCIMB 14063 / MR-1)</name>
    <dbReference type="NCBI Taxonomy" id="211586"/>
    <lineage>
        <taxon>Bacteria</taxon>
        <taxon>Pseudomonadati</taxon>
        <taxon>Pseudomonadota</taxon>
        <taxon>Gammaproteobacteria</taxon>
        <taxon>Alteromonadales</taxon>
        <taxon>Shewanellaceae</taxon>
        <taxon>Shewanella</taxon>
    </lineage>
</organism>
<sequence length="270" mass="29381">MSGQVRVAIVGAGGRMGRTLIESAYHQEHIRLGAAIERPGSSLVGVDAGELAGVGKLNIMIMDSLDYATDDFDVLIDFTAPEASIVHLDWCVRHKKAMVIGTTGFNHAQKEQINAFAEQTPVVMAPNMSVGVNLMWKLLELAAEVMGDYTDIEIIEGHHRYKKDAPSGTALKMGEVIAKTLGRDLEKCAVYGREGITGERDRETIGFATVRAGDLVGEHTAMFADIGERLEITHKASSRMTFANGAMRAAHWLVEQKPGLYDMQQVLGLN</sequence>
<evidence type="ECO:0000255" key="1">
    <source>
        <dbReference type="HAMAP-Rule" id="MF_00102"/>
    </source>
</evidence>
<evidence type="ECO:0000305" key="2"/>
<dbReference type="EC" id="1.17.1.8" evidence="1"/>
<dbReference type="EMBL" id="AE014299">
    <property type="protein sequence ID" value="AAN54210.2"/>
    <property type="molecule type" value="Genomic_DNA"/>
</dbReference>
<dbReference type="RefSeq" id="NP_716765.2">
    <property type="nucleotide sequence ID" value="NC_004347.2"/>
</dbReference>
<dbReference type="RefSeq" id="WP_011071373.1">
    <property type="nucleotide sequence ID" value="NC_004347.2"/>
</dbReference>
<dbReference type="SMR" id="Q8EHS7"/>
<dbReference type="STRING" id="211586.SO_1140"/>
<dbReference type="PaxDb" id="211586-SO_1140"/>
<dbReference type="KEGG" id="son:SO_1140"/>
<dbReference type="PATRIC" id="fig|211586.12.peg.1094"/>
<dbReference type="eggNOG" id="COG0289">
    <property type="taxonomic scope" value="Bacteria"/>
</dbReference>
<dbReference type="HOGENOM" id="CLU_047479_2_1_6"/>
<dbReference type="OrthoDB" id="9790352at2"/>
<dbReference type="PhylomeDB" id="Q8EHS7"/>
<dbReference type="BioCyc" id="SONE211586:G1GMP-1045-MONOMER"/>
<dbReference type="UniPathway" id="UPA00034">
    <property type="reaction ID" value="UER00018"/>
</dbReference>
<dbReference type="Proteomes" id="UP000008186">
    <property type="component" value="Chromosome"/>
</dbReference>
<dbReference type="GO" id="GO:0005829">
    <property type="term" value="C:cytosol"/>
    <property type="evidence" value="ECO:0000318"/>
    <property type="project" value="GO_Central"/>
</dbReference>
<dbReference type="GO" id="GO:0008839">
    <property type="term" value="F:4-hydroxy-tetrahydrodipicolinate reductase"/>
    <property type="evidence" value="ECO:0000318"/>
    <property type="project" value="GO_Central"/>
</dbReference>
<dbReference type="GO" id="GO:0051287">
    <property type="term" value="F:NAD binding"/>
    <property type="evidence" value="ECO:0007669"/>
    <property type="project" value="UniProtKB-UniRule"/>
</dbReference>
<dbReference type="GO" id="GO:0050661">
    <property type="term" value="F:NADP binding"/>
    <property type="evidence" value="ECO:0007669"/>
    <property type="project" value="UniProtKB-UniRule"/>
</dbReference>
<dbReference type="GO" id="GO:0016726">
    <property type="term" value="F:oxidoreductase activity, acting on CH or CH2 groups, NAD or NADP as acceptor"/>
    <property type="evidence" value="ECO:0007669"/>
    <property type="project" value="UniProtKB-UniRule"/>
</dbReference>
<dbReference type="GO" id="GO:0019877">
    <property type="term" value="P:diaminopimelate biosynthetic process"/>
    <property type="evidence" value="ECO:0000318"/>
    <property type="project" value="GO_Central"/>
</dbReference>
<dbReference type="GO" id="GO:0009089">
    <property type="term" value="P:lysine biosynthetic process via diaminopimelate"/>
    <property type="evidence" value="ECO:0007669"/>
    <property type="project" value="UniProtKB-UniRule"/>
</dbReference>
<dbReference type="CDD" id="cd02274">
    <property type="entry name" value="DHDPR_N"/>
    <property type="match status" value="1"/>
</dbReference>
<dbReference type="FunFam" id="3.30.360.10:FF:000004">
    <property type="entry name" value="4-hydroxy-tetrahydrodipicolinate reductase"/>
    <property type="match status" value="1"/>
</dbReference>
<dbReference type="FunFam" id="3.40.50.720:FF:000048">
    <property type="entry name" value="4-hydroxy-tetrahydrodipicolinate reductase"/>
    <property type="match status" value="1"/>
</dbReference>
<dbReference type="Gene3D" id="3.30.360.10">
    <property type="entry name" value="Dihydrodipicolinate Reductase, domain 2"/>
    <property type="match status" value="1"/>
</dbReference>
<dbReference type="Gene3D" id="3.40.50.720">
    <property type="entry name" value="NAD(P)-binding Rossmann-like Domain"/>
    <property type="match status" value="1"/>
</dbReference>
<dbReference type="HAMAP" id="MF_00102">
    <property type="entry name" value="DapB"/>
    <property type="match status" value="1"/>
</dbReference>
<dbReference type="InterPro" id="IPR022663">
    <property type="entry name" value="DapB_C"/>
</dbReference>
<dbReference type="InterPro" id="IPR000846">
    <property type="entry name" value="DapB_N"/>
</dbReference>
<dbReference type="InterPro" id="IPR022664">
    <property type="entry name" value="DapB_N_CS"/>
</dbReference>
<dbReference type="InterPro" id="IPR023940">
    <property type="entry name" value="DHDPR_bac"/>
</dbReference>
<dbReference type="InterPro" id="IPR036291">
    <property type="entry name" value="NAD(P)-bd_dom_sf"/>
</dbReference>
<dbReference type="NCBIfam" id="TIGR00036">
    <property type="entry name" value="dapB"/>
    <property type="match status" value="1"/>
</dbReference>
<dbReference type="PANTHER" id="PTHR20836:SF0">
    <property type="entry name" value="4-HYDROXY-TETRAHYDRODIPICOLINATE REDUCTASE 1, CHLOROPLASTIC-RELATED"/>
    <property type="match status" value="1"/>
</dbReference>
<dbReference type="PANTHER" id="PTHR20836">
    <property type="entry name" value="DIHYDRODIPICOLINATE REDUCTASE"/>
    <property type="match status" value="1"/>
</dbReference>
<dbReference type="Pfam" id="PF05173">
    <property type="entry name" value="DapB_C"/>
    <property type="match status" value="1"/>
</dbReference>
<dbReference type="Pfam" id="PF01113">
    <property type="entry name" value="DapB_N"/>
    <property type="match status" value="1"/>
</dbReference>
<dbReference type="PIRSF" id="PIRSF000161">
    <property type="entry name" value="DHPR"/>
    <property type="match status" value="1"/>
</dbReference>
<dbReference type="SUPFAM" id="SSF55347">
    <property type="entry name" value="Glyceraldehyde-3-phosphate dehydrogenase-like, C-terminal domain"/>
    <property type="match status" value="1"/>
</dbReference>
<dbReference type="SUPFAM" id="SSF51735">
    <property type="entry name" value="NAD(P)-binding Rossmann-fold domains"/>
    <property type="match status" value="1"/>
</dbReference>
<dbReference type="PROSITE" id="PS01298">
    <property type="entry name" value="DAPB"/>
    <property type="match status" value="1"/>
</dbReference>
<reference key="1">
    <citation type="journal article" date="2002" name="Nat. Biotechnol.">
        <title>Genome sequence of the dissimilatory metal ion-reducing bacterium Shewanella oneidensis.</title>
        <authorList>
            <person name="Heidelberg J.F."/>
            <person name="Paulsen I.T."/>
            <person name="Nelson K.E."/>
            <person name="Gaidos E.J."/>
            <person name="Nelson W.C."/>
            <person name="Read T.D."/>
            <person name="Eisen J.A."/>
            <person name="Seshadri R."/>
            <person name="Ward N.L."/>
            <person name="Methe B.A."/>
            <person name="Clayton R.A."/>
            <person name="Meyer T."/>
            <person name="Tsapin A."/>
            <person name="Scott J."/>
            <person name="Beanan M.J."/>
            <person name="Brinkac L.M."/>
            <person name="Daugherty S.C."/>
            <person name="DeBoy R.T."/>
            <person name="Dodson R.J."/>
            <person name="Durkin A.S."/>
            <person name="Haft D.H."/>
            <person name="Kolonay J.F."/>
            <person name="Madupu R."/>
            <person name="Peterson J.D."/>
            <person name="Umayam L.A."/>
            <person name="White O."/>
            <person name="Wolf A.M."/>
            <person name="Vamathevan J.J."/>
            <person name="Weidman J.F."/>
            <person name="Impraim M."/>
            <person name="Lee K."/>
            <person name="Berry K.J."/>
            <person name="Lee C."/>
            <person name="Mueller J."/>
            <person name="Khouri H.M."/>
            <person name="Gill J."/>
            <person name="Utterback T.R."/>
            <person name="McDonald L.A."/>
            <person name="Feldblyum T.V."/>
            <person name="Smith H.O."/>
            <person name="Venter J.C."/>
            <person name="Nealson K.H."/>
            <person name="Fraser C.M."/>
        </authorList>
    </citation>
    <scope>NUCLEOTIDE SEQUENCE [LARGE SCALE GENOMIC DNA]</scope>
    <source>
        <strain>ATCC 700550 / JCM 31522 / CIP 106686 / LMG 19005 / NCIMB 14063 / MR-1</strain>
    </source>
</reference>
<keyword id="KW-0028">Amino-acid biosynthesis</keyword>
<keyword id="KW-0963">Cytoplasm</keyword>
<keyword id="KW-0220">Diaminopimelate biosynthesis</keyword>
<keyword id="KW-0457">Lysine biosynthesis</keyword>
<keyword id="KW-0520">NAD</keyword>
<keyword id="KW-0521">NADP</keyword>
<keyword id="KW-0560">Oxidoreductase</keyword>
<keyword id="KW-1185">Reference proteome</keyword>